<keyword id="KW-1185">Reference proteome</keyword>
<keyword id="KW-0687">Ribonucleoprotein</keyword>
<keyword id="KW-0689">Ribosomal protein</keyword>
<keyword id="KW-0694">RNA-binding</keyword>
<keyword id="KW-0699">rRNA-binding</keyword>
<gene>
    <name evidence="1" type="primary">rpsK</name>
    <name type="ordered locus">Tbd_0428</name>
</gene>
<evidence type="ECO:0000255" key="1">
    <source>
        <dbReference type="HAMAP-Rule" id="MF_01310"/>
    </source>
</evidence>
<evidence type="ECO:0000305" key="2"/>
<dbReference type="EMBL" id="CP000116">
    <property type="protein sequence ID" value="AAZ96381.1"/>
    <property type="molecule type" value="Genomic_DNA"/>
</dbReference>
<dbReference type="RefSeq" id="WP_011310940.1">
    <property type="nucleotide sequence ID" value="NC_007404.1"/>
</dbReference>
<dbReference type="SMR" id="Q3SLM6"/>
<dbReference type="STRING" id="292415.Tbd_0428"/>
<dbReference type="KEGG" id="tbd:Tbd_0428"/>
<dbReference type="eggNOG" id="COG0100">
    <property type="taxonomic scope" value="Bacteria"/>
</dbReference>
<dbReference type="HOGENOM" id="CLU_072439_5_0_4"/>
<dbReference type="OrthoDB" id="9806415at2"/>
<dbReference type="Proteomes" id="UP000008291">
    <property type="component" value="Chromosome"/>
</dbReference>
<dbReference type="GO" id="GO:1990904">
    <property type="term" value="C:ribonucleoprotein complex"/>
    <property type="evidence" value="ECO:0007669"/>
    <property type="project" value="UniProtKB-KW"/>
</dbReference>
<dbReference type="GO" id="GO:0005840">
    <property type="term" value="C:ribosome"/>
    <property type="evidence" value="ECO:0007669"/>
    <property type="project" value="UniProtKB-KW"/>
</dbReference>
<dbReference type="GO" id="GO:0019843">
    <property type="term" value="F:rRNA binding"/>
    <property type="evidence" value="ECO:0007669"/>
    <property type="project" value="UniProtKB-UniRule"/>
</dbReference>
<dbReference type="GO" id="GO:0003735">
    <property type="term" value="F:structural constituent of ribosome"/>
    <property type="evidence" value="ECO:0007669"/>
    <property type="project" value="InterPro"/>
</dbReference>
<dbReference type="GO" id="GO:0006412">
    <property type="term" value="P:translation"/>
    <property type="evidence" value="ECO:0007669"/>
    <property type="project" value="UniProtKB-UniRule"/>
</dbReference>
<dbReference type="FunFam" id="3.30.420.80:FF:000001">
    <property type="entry name" value="30S ribosomal protein S11"/>
    <property type="match status" value="1"/>
</dbReference>
<dbReference type="Gene3D" id="3.30.420.80">
    <property type="entry name" value="Ribosomal protein S11"/>
    <property type="match status" value="1"/>
</dbReference>
<dbReference type="HAMAP" id="MF_01310">
    <property type="entry name" value="Ribosomal_uS11"/>
    <property type="match status" value="1"/>
</dbReference>
<dbReference type="InterPro" id="IPR001971">
    <property type="entry name" value="Ribosomal_uS11"/>
</dbReference>
<dbReference type="InterPro" id="IPR019981">
    <property type="entry name" value="Ribosomal_uS11_bac-type"/>
</dbReference>
<dbReference type="InterPro" id="IPR018102">
    <property type="entry name" value="Ribosomal_uS11_CS"/>
</dbReference>
<dbReference type="InterPro" id="IPR036967">
    <property type="entry name" value="Ribosomal_uS11_sf"/>
</dbReference>
<dbReference type="NCBIfam" id="NF003698">
    <property type="entry name" value="PRK05309.1"/>
    <property type="match status" value="1"/>
</dbReference>
<dbReference type="NCBIfam" id="TIGR03632">
    <property type="entry name" value="uS11_bact"/>
    <property type="match status" value="1"/>
</dbReference>
<dbReference type="PANTHER" id="PTHR11759">
    <property type="entry name" value="40S RIBOSOMAL PROTEIN S14/30S RIBOSOMAL PROTEIN S11"/>
    <property type="match status" value="1"/>
</dbReference>
<dbReference type="Pfam" id="PF00411">
    <property type="entry name" value="Ribosomal_S11"/>
    <property type="match status" value="1"/>
</dbReference>
<dbReference type="PIRSF" id="PIRSF002131">
    <property type="entry name" value="Ribosomal_S11"/>
    <property type="match status" value="1"/>
</dbReference>
<dbReference type="SUPFAM" id="SSF53137">
    <property type="entry name" value="Translational machinery components"/>
    <property type="match status" value="1"/>
</dbReference>
<dbReference type="PROSITE" id="PS00054">
    <property type="entry name" value="RIBOSOMAL_S11"/>
    <property type="match status" value="1"/>
</dbReference>
<reference key="1">
    <citation type="journal article" date="2006" name="J. Bacteriol.">
        <title>The genome sequence of the obligately chemolithoautotrophic, facultatively anaerobic bacterium Thiobacillus denitrificans.</title>
        <authorList>
            <person name="Beller H.R."/>
            <person name="Chain P.S."/>
            <person name="Letain T.E."/>
            <person name="Chakicherla A."/>
            <person name="Larimer F.W."/>
            <person name="Richardson P.M."/>
            <person name="Coleman M.A."/>
            <person name="Wood A.P."/>
            <person name="Kelly D.P."/>
        </authorList>
    </citation>
    <scope>NUCLEOTIDE SEQUENCE [LARGE SCALE GENOMIC DNA]</scope>
    <source>
        <strain>ATCC 25259 / T1</strain>
    </source>
</reference>
<sequence length="130" mass="13791">MATKTAARVRKKVKKNVAEGIAHIHASFNNTIVTITDRQGNALSWATAGGAGFKGSRKSTPFAAQVAAENAGKMAQEYGVKNLEVRIKGPGPGRESTVRALNALGFKIVAISDVTPIPHNGCRPSKKRRI</sequence>
<name>RS11_THIDA</name>
<feature type="chain" id="PRO_0000230438" description="Small ribosomal subunit protein uS11">
    <location>
        <begin position="1"/>
        <end position="130"/>
    </location>
</feature>
<proteinExistence type="inferred from homology"/>
<comment type="function">
    <text evidence="1">Located on the platform of the 30S subunit, it bridges several disparate RNA helices of the 16S rRNA. Forms part of the Shine-Dalgarno cleft in the 70S ribosome.</text>
</comment>
<comment type="subunit">
    <text evidence="1">Part of the 30S ribosomal subunit. Interacts with proteins S7 and S18. Binds to IF-3.</text>
</comment>
<comment type="similarity">
    <text evidence="1">Belongs to the universal ribosomal protein uS11 family.</text>
</comment>
<accession>Q3SLM6</accession>
<organism>
    <name type="scientific">Thiobacillus denitrificans (strain ATCC 25259 / T1)</name>
    <dbReference type="NCBI Taxonomy" id="292415"/>
    <lineage>
        <taxon>Bacteria</taxon>
        <taxon>Pseudomonadati</taxon>
        <taxon>Pseudomonadota</taxon>
        <taxon>Betaproteobacteria</taxon>
        <taxon>Nitrosomonadales</taxon>
        <taxon>Thiobacillaceae</taxon>
        <taxon>Thiobacillus</taxon>
    </lineage>
</organism>
<protein>
    <recommendedName>
        <fullName evidence="1">Small ribosomal subunit protein uS11</fullName>
    </recommendedName>
    <alternativeName>
        <fullName evidence="2">30S ribosomal protein S11</fullName>
    </alternativeName>
</protein>